<dbReference type="EC" id="4.2.1.20" evidence="1"/>
<dbReference type="EMBL" id="AP008232">
    <property type="protein sequence ID" value="BAE74673.1"/>
    <property type="molecule type" value="Genomic_DNA"/>
</dbReference>
<dbReference type="RefSeq" id="WP_011411218.1">
    <property type="nucleotide sequence ID" value="NC_007712.1"/>
</dbReference>
<dbReference type="SMR" id="Q2NT52"/>
<dbReference type="STRING" id="343509.SG1398"/>
<dbReference type="KEGG" id="sgl:SG1398"/>
<dbReference type="eggNOG" id="COG0133">
    <property type="taxonomic scope" value="Bacteria"/>
</dbReference>
<dbReference type="HOGENOM" id="CLU_016734_3_1_6"/>
<dbReference type="OrthoDB" id="9766131at2"/>
<dbReference type="BioCyc" id="SGLO343509:SGP1_RS12315-MONOMER"/>
<dbReference type="UniPathway" id="UPA00035">
    <property type="reaction ID" value="UER00044"/>
</dbReference>
<dbReference type="Proteomes" id="UP000001932">
    <property type="component" value="Chromosome"/>
</dbReference>
<dbReference type="GO" id="GO:0005737">
    <property type="term" value="C:cytoplasm"/>
    <property type="evidence" value="ECO:0007669"/>
    <property type="project" value="TreeGrafter"/>
</dbReference>
<dbReference type="GO" id="GO:0004834">
    <property type="term" value="F:tryptophan synthase activity"/>
    <property type="evidence" value="ECO:0007669"/>
    <property type="project" value="UniProtKB-UniRule"/>
</dbReference>
<dbReference type="CDD" id="cd06446">
    <property type="entry name" value="Trp-synth_B"/>
    <property type="match status" value="1"/>
</dbReference>
<dbReference type="FunFam" id="3.40.50.1100:FF:000001">
    <property type="entry name" value="Tryptophan synthase beta chain"/>
    <property type="match status" value="1"/>
</dbReference>
<dbReference type="FunFam" id="3.40.50.1100:FF:000004">
    <property type="entry name" value="Tryptophan synthase beta chain"/>
    <property type="match status" value="1"/>
</dbReference>
<dbReference type="Gene3D" id="3.40.50.1100">
    <property type="match status" value="2"/>
</dbReference>
<dbReference type="HAMAP" id="MF_00133">
    <property type="entry name" value="Trp_synth_beta"/>
    <property type="match status" value="1"/>
</dbReference>
<dbReference type="InterPro" id="IPR006653">
    <property type="entry name" value="Trp_synth_b_CS"/>
</dbReference>
<dbReference type="InterPro" id="IPR006654">
    <property type="entry name" value="Trp_synth_beta"/>
</dbReference>
<dbReference type="InterPro" id="IPR023026">
    <property type="entry name" value="Trp_synth_beta/beta-like"/>
</dbReference>
<dbReference type="InterPro" id="IPR001926">
    <property type="entry name" value="TrpB-like_PALP"/>
</dbReference>
<dbReference type="InterPro" id="IPR036052">
    <property type="entry name" value="TrpB-like_PALP_sf"/>
</dbReference>
<dbReference type="NCBIfam" id="TIGR00263">
    <property type="entry name" value="trpB"/>
    <property type="match status" value="1"/>
</dbReference>
<dbReference type="PANTHER" id="PTHR48077:SF3">
    <property type="entry name" value="TRYPTOPHAN SYNTHASE"/>
    <property type="match status" value="1"/>
</dbReference>
<dbReference type="PANTHER" id="PTHR48077">
    <property type="entry name" value="TRYPTOPHAN SYNTHASE-RELATED"/>
    <property type="match status" value="1"/>
</dbReference>
<dbReference type="Pfam" id="PF00291">
    <property type="entry name" value="PALP"/>
    <property type="match status" value="1"/>
</dbReference>
<dbReference type="PIRSF" id="PIRSF001413">
    <property type="entry name" value="Trp_syn_beta"/>
    <property type="match status" value="1"/>
</dbReference>
<dbReference type="SUPFAM" id="SSF53686">
    <property type="entry name" value="Tryptophan synthase beta subunit-like PLP-dependent enzymes"/>
    <property type="match status" value="1"/>
</dbReference>
<dbReference type="PROSITE" id="PS00168">
    <property type="entry name" value="TRP_SYNTHASE_BETA"/>
    <property type="match status" value="1"/>
</dbReference>
<protein>
    <recommendedName>
        <fullName evidence="1">Tryptophan synthase beta chain</fullName>
        <ecNumber evidence="1">4.2.1.20</ecNumber>
    </recommendedName>
</protein>
<evidence type="ECO:0000255" key="1">
    <source>
        <dbReference type="HAMAP-Rule" id="MF_00133"/>
    </source>
</evidence>
<keyword id="KW-0028">Amino-acid biosynthesis</keyword>
<keyword id="KW-0057">Aromatic amino acid biosynthesis</keyword>
<keyword id="KW-0456">Lyase</keyword>
<keyword id="KW-0663">Pyridoxal phosphate</keyword>
<keyword id="KW-0822">Tryptophan biosynthesis</keyword>
<sequence>MTRLNPYFGEFGGMYVPQILMPALIQLEDAFVSAQSDPAFQAEFSDLLTNYAGRPTPLTLCRNLTAGTRTKLYLKREDLLHGGAHKTNQVLGQALLAKRMGKTEIIAETGAGQHGVASALSSALLGLKCRIYMGAKDIERQSPNVFRMRLMGAEVIPVHSGSSTLKDACNEALRDWSDSYERAHYMLGTAAGPHPFPTIVREFQRMIGEETRAQLQEHEQRLPDAVIACVGGGSNAIGMFADFIDEPAVRLIGVEPGGLGIETRQHGASLKHGRTGIYFGMKSPMMQSAEGQIEESYSISAGLDFPSVGPQHAYLDSIGRAEYISATDEEALDAFRRLSRHEGIIPALESSHALAHALRMIQAEPEKEQILVVNLSGRGDKDIFTVHDILKARGDI</sequence>
<name>TRPB_SODGM</name>
<gene>
    <name evidence="1" type="primary">trpB</name>
    <name type="ordered locus">SG1398</name>
</gene>
<accession>Q2NT52</accession>
<feature type="chain" id="PRO_1000018403" description="Tryptophan synthase beta chain">
    <location>
        <begin position="1"/>
        <end position="396"/>
    </location>
</feature>
<feature type="modified residue" description="N6-(pyridoxal phosphate)lysine" evidence="1">
    <location>
        <position position="86"/>
    </location>
</feature>
<comment type="function">
    <text evidence="1">The beta subunit is responsible for the synthesis of L-tryptophan from indole and L-serine.</text>
</comment>
<comment type="catalytic activity">
    <reaction evidence="1">
        <text>(1S,2R)-1-C-(indol-3-yl)glycerol 3-phosphate + L-serine = D-glyceraldehyde 3-phosphate + L-tryptophan + H2O</text>
        <dbReference type="Rhea" id="RHEA:10532"/>
        <dbReference type="ChEBI" id="CHEBI:15377"/>
        <dbReference type="ChEBI" id="CHEBI:33384"/>
        <dbReference type="ChEBI" id="CHEBI:57912"/>
        <dbReference type="ChEBI" id="CHEBI:58866"/>
        <dbReference type="ChEBI" id="CHEBI:59776"/>
        <dbReference type="EC" id="4.2.1.20"/>
    </reaction>
</comment>
<comment type="cofactor">
    <cofactor evidence="1">
        <name>pyridoxal 5'-phosphate</name>
        <dbReference type="ChEBI" id="CHEBI:597326"/>
    </cofactor>
</comment>
<comment type="pathway">
    <text evidence="1">Amino-acid biosynthesis; L-tryptophan biosynthesis; L-tryptophan from chorismate: step 5/5.</text>
</comment>
<comment type="subunit">
    <text evidence="1">Tetramer of two alpha and two beta chains.</text>
</comment>
<comment type="similarity">
    <text evidence="1">Belongs to the TrpB family.</text>
</comment>
<organism>
    <name type="scientific">Sodalis glossinidius (strain morsitans)</name>
    <dbReference type="NCBI Taxonomy" id="343509"/>
    <lineage>
        <taxon>Bacteria</taxon>
        <taxon>Pseudomonadati</taxon>
        <taxon>Pseudomonadota</taxon>
        <taxon>Gammaproteobacteria</taxon>
        <taxon>Enterobacterales</taxon>
        <taxon>Bruguierivoracaceae</taxon>
        <taxon>Sodalis</taxon>
    </lineage>
</organism>
<proteinExistence type="inferred from homology"/>
<reference key="1">
    <citation type="journal article" date="2006" name="Genome Res.">
        <title>Massive genome erosion and functional adaptations provide insights into the symbiotic lifestyle of Sodalis glossinidius in the tsetse host.</title>
        <authorList>
            <person name="Toh H."/>
            <person name="Weiss B.L."/>
            <person name="Perkin S.A.H."/>
            <person name="Yamashita A."/>
            <person name="Oshima K."/>
            <person name="Hattori M."/>
            <person name="Aksoy S."/>
        </authorList>
    </citation>
    <scope>NUCLEOTIDE SEQUENCE [LARGE SCALE GENOMIC DNA]</scope>
    <source>
        <strain>morsitans</strain>
    </source>
</reference>